<protein>
    <recommendedName>
        <fullName evidence="1">Small ribosomal subunit protein uS11</fullName>
    </recommendedName>
    <alternativeName>
        <fullName evidence="2">30S ribosomal protein S11</fullName>
    </alternativeName>
</protein>
<dbReference type="EMBL" id="AB030282">
    <property type="protein sequence ID" value="BAA85897.1"/>
    <property type="molecule type" value="Genomic_DNA"/>
</dbReference>
<dbReference type="EMBL" id="AE004437">
    <property type="protein sequence ID" value="AAG19519.1"/>
    <property type="status" value="ALT_INIT"/>
    <property type="molecule type" value="Genomic_DNA"/>
</dbReference>
<dbReference type="PIR" id="C84269">
    <property type="entry name" value="C84269"/>
</dbReference>
<dbReference type="PIR" id="T43939">
    <property type="entry name" value="T43939"/>
</dbReference>
<dbReference type="RefSeq" id="WP_010902814.1">
    <property type="nucleotide sequence ID" value="NC_002607.1"/>
</dbReference>
<dbReference type="SMR" id="Q9HQJ5"/>
<dbReference type="FunCoup" id="Q9HQJ5">
    <property type="interactions" value="141"/>
</dbReference>
<dbReference type="STRING" id="64091.VNG_1134G"/>
<dbReference type="PaxDb" id="64091-VNG_1134G"/>
<dbReference type="KEGG" id="hal:VNG_1134G"/>
<dbReference type="PATRIC" id="fig|64091.14.peg.865"/>
<dbReference type="HOGENOM" id="CLU_072439_6_1_2"/>
<dbReference type="InParanoid" id="Q9HQJ5"/>
<dbReference type="OrthoDB" id="12054at2157"/>
<dbReference type="PhylomeDB" id="Q9HQJ5"/>
<dbReference type="Proteomes" id="UP000000554">
    <property type="component" value="Chromosome"/>
</dbReference>
<dbReference type="GO" id="GO:0022627">
    <property type="term" value="C:cytosolic small ribosomal subunit"/>
    <property type="evidence" value="ECO:0000318"/>
    <property type="project" value="GO_Central"/>
</dbReference>
<dbReference type="GO" id="GO:0019843">
    <property type="term" value="F:rRNA binding"/>
    <property type="evidence" value="ECO:0007669"/>
    <property type="project" value="UniProtKB-UniRule"/>
</dbReference>
<dbReference type="GO" id="GO:0003735">
    <property type="term" value="F:structural constituent of ribosome"/>
    <property type="evidence" value="ECO:0000318"/>
    <property type="project" value="GO_Central"/>
</dbReference>
<dbReference type="GO" id="GO:0006412">
    <property type="term" value="P:translation"/>
    <property type="evidence" value="ECO:0000318"/>
    <property type="project" value="GO_Central"/>
</dbReference>
<dbReference type="FunFam" id="3.30.420.80:FF:000007">
    <property type="entry name" value="30S ribosomal protein S11"/>
    <property type="match status" value="1"/>
</dbReference>
<dbReference type="Gene3D" id="3.30.420.80">
    <property type="entry name" value="Ribosomal protein S11"/>
    <property type="match status" value="1"/>
</dbReference>
<dbReference type="HAMAP" id="MF_01310">
    <property type="entry name" value="Ribosomal_uS11"/>
    <property type="match status" value="1"/>
</dbReference>
<dbReference type="InterPro" id="IPR001971">
    <property type="entry name" value="Ribosomal_uS11"/>
</dbReference>
<dbReference type="InterPro" id="IPR019961">
    <property type="entry name" value="Ribosomal_uS11_archaeal"/>
</dbReference>
<dbReference type="InterPro" id="IPR018102">
    <property type="entry name" value="Ribosomal_uS11_CS"/>
</dbReference>
<dbReference type="InterPro" id="IPR036967">
    <property type="entry name" value="Ribosomal_uS11_sf"/>
</dbReference>
<dbReference type="NCBIfam" id="TIGR03628">
    <property type="entry name" value="arch_S11P"/>
    <property type="match status" value="1"/>
</dbReference>
<dbReference type="NCBIfam" id="NF007176">
    <property type="entry name" value="PRK09607.1"/>
    <property type="match status" value="1"/>
</dbReference>
<dbReference type="PANTHER" id="PTHR11759">
    <property type="entry name" value="40S RIBOSOMAL PROTEIN S14/30S RIBOSOMAL PROTEIN S11"/>
    <property type="match status" value="1"/>
</dbReference>
<dbReference type="Pfam" id="PF00411">
    <property type="entry name" value="Ribosomal_S11"/>
    <property type="match status" value="1"/>
</dbReference>
<dbReference type="PIRSF" id="PIRSF002131">
    <property type="entry name" value="Ribosomal_S11"/>
    <property type="match status" value="1"/>
</dbReference>
<dbReference type="SUPFAM" id="SSF53137">
    <property type="entry name" value="Translational machinery components"/>
    <property type="match status" value="1"/>
</dbReference>
<dbReference type="PROSITE" id="PS00054">
    <property type="entry name" value="RIBOSOMAL_S11"/>
    <property type="match status" value="1"/>
</dbReference>
<keyword id="KW-1185">Reference proteome</keyword>
<keyword id="KW-0687">Ribonucleoprotein</keyword>
<keyword id="KW-0689">Ribosomal protein</keyword>
<keyword id="KW-0694">RNA-binding</keyword>
<keyword id="KW-0699">rRNA-binding</keyword>
<proteinExistence type="inferred from homology"/>
<accession>Q9HQJ5</accession>
<accession>Q9V2W2</accession>
<reference key="1">
    <citation type="journal article" date="1999" name="Biochem. Biophys. Res. Commun.">
        <title>Cloning, sequencing, and characterization of ribosomal protein and RNA polymerase genes from the region analogous to the alpha-operon of Escherichia coli in halophilic archaea, Halobacterium halobium.</title>
        <authorList>
            <person name="Sano K."/>
            <person name="Taguchi A."/>
            <person name="Furumoto H."/>
            <person name="Uda T."/>
            <person name="Itoh T."/>
        </authorList>
    </citation>
    <scope>NUCLEOTIDE SEQUENCE [GENOMIC DNA]</scope>
    <source>
        <strain>R1 / S9</strain>
    </source>
</reference>
<reference key="2">
    <citation type="journal article" date="2000" name="Proc. Natl. Acad. Sci. U.S.A.">
        <title>Genome sequence of Halobacterium species NRC-1.</title>
        <authorList>
            <person name="Ng W.V."/>
            <person name="Kennedy S.P."/>
            <person name="Mahairas G.G."/>
            <person name="Berquist B."/>
            <person name="Pan M."/>
            <person name="Shukla H.D."/>
            <person name="Lasky S.R."/>
            <person name="Baliga N.S."/>
            <person name="Thorsson V."/>
            <person name="Sbrogna J."/>
            <person name="Swartzell S."/>
            <person name="Weir D."/>
            <person name="Hall J."/>
            <person name="Dahl T.A."/>
            <person name="Welti R."/>
            <person name="Goo Y.A."/>
            <person name="Leithauser B."/>
            <person name="Keller K."/>
            <person name="Cruz R."/>
            <person name="Danson M.J."/>
            <person name="Hough D.W."/>
            <person name="Maddocks D.G."/>
            <person name="Jablonski P.E."/>
            <person name="Krebs M.P."/>
            <person name="Angevine C.M."/>
            <person name="Dale H."/>
            <person name="Isenbarger T.A."/>
            <person name="Peck R.F."/>
            <person name="Pohlschroder M."/>
            <person name="Spudich J.L."/>
            <person name="Jung K.-H."/>
            <person name="Alam M."/>
            <person name="Freitas T."/>
            <person name="Hou S."/>
            <person name="Daniels C.J."/>
            <person name="Dennis P.P."/>
            <person name="Omer A.D."/>
            <person name="Ebhardt H."/>
            <person name="Lowe T.M."/>
            <person name="Liang P."/>
            <person name="Riley M."/>
            <person name="Hood L."/>
            <person name="DasSarma S."/>
        </authorList>
    </citation>
    <scope>NUCLEOTIDE SEQUENCE [LARGE SCALE GENOMIC DNA]</scope>
    <source>
        <strain>ATCC 700922 / JCM 11081 / NRC-1</strain>
    </source>
</reference>
<sequence>MADDTKWGIAHVHASFNNTIMTVTDQTGAETLAKSSGGSVVKQNRDEASPYAAMQMAEQLAEEVLDQGIEKVHVRVRGPGGNLQRSPGPGAQAAIRALARAGLEIGRIEDVTPIPHDGTRPPKNSGY</sequence>
<gene>
    <name evidence="1" type="primary">rps11</name>
    <name type="ordered locus">VNG_1134G</name>
</gene>
<organism>
    <name type="scientific">Halobacterium salinarum (strain ATCC 700922 / JCM 11081 / NRC-1)</name>
    <name type="common">Halobacterium halobium</name>
    <dbReference type="NCBI Taxonomy" id="64091"/>
    <lineage>
        <taxon>Archaea</taxon>
        <taxon>Methanobacteriati</taxon>
        <taxon>Methanobacteriota</taxon>
        <taxon>Stenosarchaea group</taxon>
        <taxon>Halobacteria</taxon>
        <taxon>Halobacteriales</taxon>
        <taxon>Halobacteriaceae</taxon>
        <taxon>Halobacterium</taxon>
        <taxon>Halobacterium salinarum NRC-34001</taxon>
    </lineage>
</organism>
<feature type="chain" id="PRO_0000123269" description="Small ribosomal subunit protein uS11">
    <location>
        <begin position="1"/>
        <end position="127"/>
    </location>
</feature>
<name>RS11_HALSA</name>
<evidence type="ECO:0000255" key="1">
    <source>
        <dbReference type="HAMAP-Rule" id="MF_01310"/>
    </source>
</evidence>
<evidence type="ECO:0000305" key="2"/>
<comment type="function">
    <text evidence="1">Located on the platform of the 30S subunit.</text>
</comment>
<comment type="subunit">
    <text evidence="1">Part of the 30S ribosomal subunit.</text>
</comment>
<comment type="similarity">
    <text evidence="1">Belongs to the universal ribosomal protein uS11 family.</text>
</comment>
<comment type="sequence caution" evidence="2">
    <conflict type="erroneous initiation">
        <sequence resource="EMBL-CDS" id="AAG19519"/>
    </conflict>
</comment>